<organism>
    <name type="scientific">Talaromyces marneffei (strain ATCC 18224 / CBS 334.59 / QM 7333)</name>
    <name type="common">Penicillium marneffei</name>
    <dbReference type="NCBI Taxonomy" id="441960"/>
    <lineage>
        <taxon>Eukaryota</taxon>
        <taxon>Fungi</taxon>
        <taxon>Dikarya</taxon>
        <taxon>Ascomycota</taxon>
        <taxon>Pezizomycotina</taxon>
        <taxon>Eurotiomycetes</taxon>
        <taxon>Eurotiomycetidae</taxon>
        <taxon>Eurotiales</taxon>
        <taxon>Trichocomaceae</taxon>
        <taxon>Talaromyces</taxon>
        <taxon>Talaromyces sect. Talaromyces</taxon>
    </lineage>
</organism>
<dbReference type="EMBL" id="DS995900">
    <property type="protein sequence ID" value="EEA26328.1"/>
    <property type="molecule type" value="Genomic_DNA"/>
</dbReference>
<dbReference type="RefSeq" id="XP_002146875.1">
    <property type="nucleotide sequence ID" value="XM_002146839.1"/>
</dbReference>
<dbReference type="SMR" id="B6QAV0"/>
<dbReference type="STRING" id="441960.B6QAV0"/>
<dbReference type="VEuPathDB" id="FungiDB:PMAA_074010"/>
<dbReference type="HOGENOM" id="CLU_026794_0_0_1"/>
<dbReference type="OrthoDB" id="13627at28568"/>
<dbReference type="PhylomeDB" id="B6QAV0"/>
<dbReference type="Proteomes" id="UP000001294">
    <property type="component" value="Unassembled WGS sequence"/>
</dbReference>
<dbReference type="GO" id="GO:0005789">
    <property type="term" value="C:endoplasmic reticulum membrane"/>
    <property type="evidence" value="ECO:0007669"/>
    <property type="project" value="UniProtKB-SubCell"/>
</dbReference>
<dbReference type="GO" id="GO:0032865">
    <property type="term" value="C:ERMES complex"/>
    <property type="evidence" value="ECO:0007669"/>
    <property type="project" value="UniProtKB-UniRule"/>
</dbReference>
<dbReference type="GO" id="GO:0008289">
    <property type="term" value="F:lipid binding"/>
    <property type="evidence" value="ECO:0007669"/>
    <property type="project" value="UniProtKB-KW"/>
</dbReference>
<dbReference type="GO" id="GO:0000002">
    <property type="term" value="P:mitochondrial genome maintenance"/>
    <property type="evidence" value="ECO:0007669"/>
    <property type="project" value="UniProtKB-UniRule"/>
</dbReference>
<dbReference type="GO" id="GO:1990456">
    <property type="term" value="P:mitochondrion-endoplasmic reticulum membrane tethering"/>
    <property type="evidence" value="ECO:0007669"/>
    <property type="project" value="TreeGrafter"/>
</dbReference>
<dbReference type="GO" id="GO:0015914">
    <property type="term" value="P:phospholipid transport"/>
    <property type="evidence" value="ECO:0007669"/>
    <property type="project" value="TreeGrafter"/>
</dbReference>
<dbReference type="GO" id="GO:0045040">
    <property type="term" value="P:protein insertion into mitochondrial outer membrane"/>
    <property type="evidence" value="ECO:0007669"/>
    <property type="project" value="UniProtKB-UniRule"/>
</dbReference>
<dbReference type="CDD" id="cd21672">
    <property type="entry name" value="SMP_Mdm12"/>
    <property type="match status" value="1"/>
</dbReference>
<dbReference type="HAMAP" id="MF_03104">
    <property type="entry name" value="Mdm12"/>
    <property type="match status" value="1"/>
</dbReference>
<dbReference type="InterPro" id="IPR027532">
    <property type="entry name" value="Mdm12"/>
</dbReference>
<dbReference type="InterPro" id="IPR019411">
    <property type="entry name" value="MMM1_dom"/>
</dbReference>
<dbReference type="InterPro" id="IPR031468">
    <property type="entry name" value="SMP_LBD"/>
</dbReference>
<dbReference type="PANTHER" id="PTHR28204">
    <property type="entry name" value="MITOCHONDRIAL DISTRIBUTION AND MORPHOLOGY PROTEIN 12"/>
    <property type="match status" value="1"/>
</dbReference>
<dbReference type="PANTHER" id="PTHR28204:SF1">
    <property type="entry name" value="MITOCHONDRIAL DISTRIBUTION AND MORPHOLOGY PROTEIN 12"/>
    <property type="match status" value="1"/>
</dbReference>
<dbReference type="Pfam" id="PF10296">
    <property type="entry name" value="MMM1"/>
    <property type="match status" value="1"/>
</dbReference>
<dbReference type="PROSITE" id="PS51847">
    <property type="entry name" value="SMP"/>
    <property type="match status" value="1"/>
</dbReference>
<sequence length="489" mass="54232">MSIDLNWEAATSGPDGEQLAERIRCFIHDKFQQVPLPRFIRSVNVHSFEFGSIAPELEIKDICDPFVDFYEESDSEDEDEGHEDIQSDASSDRAAADKRGMRYRHDNNGHDEHGTNHHDHLRTSQWVTGEIDGHHQSAQSPLRSPIGLGDHLNAQFRSTTPNILPGVTSNLGYHLMMGNLSGTQTPLVAVAGGGTPFGTGWPDAVMHGGSQLAGQPHGRGRGREENNNNNLDTGSPSRPSTANTNPTQLSHGQSAAGSSSNNTSNDPTVIYNDHASSTTATAHGLHEGREKQAPTSIIDQESPPSPTPHMRERRPEDFQVICRVKYAGDVKLSLTAEILLDYPMPSFVGLPLKLNITGITFDGVAVVAYIRRRAHLCFLSPEDADALLGDEEEDINHQQRQQQQQQHPYPTTNTSESINNNNPETHPPQPRRRFGSLLQQIRVDSEIGRKENGKQALKNVGKVERFVLDQVRRIFEDEFVFPSFWTFLV</sequence>
<protein>
    <recommendedName>
        <fullName evidence="1">Mitochondrial distribution and morphology protein 12</fullName>
    </recommendedName>
    <alternativeName>
        <fullName evidence="1">Mitochondrial inheritance component mdm12</fullName>
    </alternativeName>
</protein>
<comment type="function">
    <text evidence="1">Component of the ERMES/MDM complex, which serves as a molecular tether to connect the endoplasmic reticulum (ER) and mitochondria. Components of this complex are involved in the control of mitochondrial shape and protein biogenesis, and function in nonvesicular lipid trafficking between the ER and mitochondria. mdm12 is required for the interaction of the ER-resident membrane protein MMM1 and the outer mitochondrial membrane-resident beta-barrel protein MDM10. The mdm12-MMM1 subcomplex functions in the major beta-barrel assembly pathway that is responsible for biogenesis of all mitochondrial outer membrane beta-barrel proteins, and acts in a late step after the SAM complex. The MDM10-mdm12-MMM1 subcomplex further acts in the TOM40-specific pathway after the action of the mdm12-MMM1 complex. Essential for establishing and maintaining the structure of mitochondria and maintenance of mtDNA nucleoids.</text>
</comment>
<comment type="subunit">
    <text evidence="1">Component of the ER-mitochondria encounter structure (ERMES) or MDM complex, composed of MMM1, MDM10, mdm12 and MDM34. A MMM1 homodimer associates with one molecule of mdm12 on each side in a pairwise head-to-tail manner, and the SMP-LTD domains of MMM1 and mdm12 generate a continuous hydrophobic tunnel for phospholipid trafficking.</text>
</comment>
<comment type="subcellular location">
    <subcellularLocation>
        <location evidence="1">Mitochondrion outer membrane</location>
        <topology evidence="1">Peripheral membrane protein</topology>
        <orientation evidence="1">Cytoplasmic side</orientation>
    </subcellularLocation>
    <subcellularLocation>
        <location evidence="1">Endoplasmic reticulum membrane</location>
        <topology evidence="1">Peripheral membrane protein</topology>
        <orientation evidence="1">Cytoplasmic side</orientation>
    </subcellularLocation>
    <text evidence="1">The ERMES/MDM complex localizes to a few discrete foci (around 10 per single cell), that represent mitochondria-endoplasmic reticulum junctions. These foci are often found next to mtDNA nucleoids.</text>
</comment>
<comment type="domain">
    <text evidence="1">The SMP-LTD domain is a barrel-like domain that can bind various types of glycerophospholipids in its interior and mediate their transfer between two adjacent bilayers.</text>
</comment>
<comment type="similarity">
    <text evidence="1">Belongs to the MDM12 family.</text>
</comment>
<reference key="1">
    <citation type="journal article" date="2015" name="Genome Announc.">
        <title>Genome sequence of the AIDS-associated pathogen Penicillium marneffei (ATCC18224) and its near taxonomic relative Talaromyces stipitatus (ATCC10500).</title>
        <authorList>
            <person name="Nierman W.C."/>
            <person name="Fedorova-Abrams N.D."/>
            <person name="Andrianopoulos A."/>
        </authorList>
    </citation>
    <scope>NUCLEOTIDE SEQUENCE [LARGE SCALE GENOMIC DNA]</scope>
    <source>
        <strain>ATCC 18224 / CBS 334.59 / QM 7333</strain>
    </source>
</reference>
<keyword id="KW-0256">Endoplasmic reticulum</keyword>
<keyword id="KW-0445">Lipid transport</keyword>
<keyword id="KW-0446">Lipid-binding</keyword>
<keyword id="KW-0472">Membrane</keyword>
<keyword id="KW-0496">Mitochondrion</keyword>
<keyword id="KW-1000">Mitochondrion outer membrane</keyword>
<keyword id="KW-1185">Reference proteome</keyword>
<keyword id="KW-0813">Transport</keyword>
<gene>
    <name evidence="1" type="primary">mdm12</name>
    <name type="ORF">PMAA_074010</name>
</gene>
<proteinExistence type="inferred from homology"/>
<accession>B6QAV0</accession>
<feature type="chain" id="PRO_0000384301" description="Mitochondrial distribution and morphology protein 12">
    <location>
        <begin position="1"/>
        <end position="489"/>
    </location>
</feature>
<feature type="domain" description="SMP-LTD" evidence="1">
    <location>
        <begin position="1"/>
        <end position="489"/>
    </location>
</feature>
<feature type="region of interest" description="Disordered" evidence="2">
    <location>
        <begin position="72"/>
        <end position="97"/>
    </location>
</feature>
<feature type="region of interest" description="Disordered" evidence="2">
    <location>
        <begin position="201"/>
        <end position="313"/>
    </location>
</feature>
<feature type="region of interest" description="Disordered" evidence="2">
    <location>
        <begin position="394"/>
        <end position="432"/>
    </location>
</feature>
<feature type="compositionally biased region" description="Acidic residues" evidence="2">
    <location>
        <begin position="72"/>
        <end position="82"/>
    </location>
</feature>
<feature type="compositionally biased region" description="Polar residues" evidence="2">
    <location>
        <begin position="231"/>
        <end position="249"/>
    </location>
</feature>
<feature type="compositionally biased region" description="Low complexity" evidence="2">
    <location>
        <begin position="250"/>
        <end position="265"/>
    </location>
</feature>
<feature type="compositionally biased region" description="Low complexity" evidence="2">
    <location>
        <begin position="398"/>
        <end position="424"/>
    </location>
</feature>
<evidence type="ECO:0000255" key="1">
    <source>
        <dbReference type="HAMAP-Rule" id="MF_03104"/>
    </source>
</evidence>
<evidence type="ECO:0000256" key="2">
    <source>
        <dbReference type="SAM" id="MobiDB-lite"/>
    </source>
</evidence>
<name>MDM12_TALMQ</name>